<comment type="function">
    <text evidence="1">Required to load the replicative helix DnaB onto single-stranded (ss)DNA, to initiate chromosomal replication. DnaC alters the inter-domain and inter-subunit interactions of DnaB, inducing an open ring conformation that allows ssDNA to access the interior of the DnaB(6):DnaC(6) ring. Has ATPase activity only in the presence of DnaB and ssDNA. ssDNA binds to the central pore in the DnaB(6):DnaC(6) complex, making contacts with both subunits. It forms, in concert with DnaB protein and other prepriming proteins DnaT, N, N', N'' a prepriming protein complex on the specific site of the template DNA recognized by protein N' (By similarity).</text>
</comment>
<comment type="catalytic activity">
    <reaction evidence="1">
        <text>ATP + H2O = ADP + phosphate + H(+)</text>
        <dbReference type="Rhea" id="RHEA:13065"/>
        <dbReference type="ChEBI" id="CHEBI:15377"/>
        <dbReference type="ChEBI" id="CHEBI:15378"/>
        <dbReference type="ChEBI" id="CHEBI:30616"/>
        <dbReference type="ChEBI" id="CHEBI:43474"/>
        <dbReference type="ChEBI" id="CHEBI:456216"/>
    </reaction>
    <physiologicalReaction direction="left-to-right" evidence="1">
        <dbReference type="Rhea" id="RHEA:13066"/>
    </physiologicalReaction>
</comment>
<comment type="subunit">
    <text evidence="1">The helix loader is a DnaB(6):DnaC(6) complex with a crack opening large enough to allow ssDNA into the central cavity.</text>
</comment>
<comment type="similarity">
    <text evidence="2">Belongs to the DnaC family.</text>
</comment>
<accession>P57134</accession>
<feature type="chain" id="PRO_0000079951" description="Replicative helicase loader DnaC">
    <location>
        <begin position="1"/>
        <end position="246"/>
    </location>
</feature>
<feature type="site" description="Probably involved in the interaction with the DnaB protein" evidence="1">
    <location>
        <position position="69"/>
    </location>
</feature>
<name>DNAC_BUCAI</name>
<reference key="1">
    <citation type="journal article" date="2000" name="Nature">
        <title>Genome sequence of the endocellular bacterial symbiont of aphids Buchnera sp. APS.</title>
        <authorList>
            <person name="Shigenobu S."/>
            <person name="Watanabe H."/>
            <person name="Hattori M."/>
            <person name="Sakaki Y."/>
            <person name="Ishikawa H."/>
        </authorList>
    </citation>
    <scope>NUCLEOTIDE SEQUENCE [LARGE SCALE GENOMIC DNA]</scope>
    <source>
        <strain>APS</strain>
    </source>
</reference>
<gene>
    <name type="primary">dnaC</name>
    <name type="ordered locus">BU021</name>
</gene>
<evidence type="ECO:0000250" key="1">
    <source>
        <dbReference type="UniProtKB" id="P0AEF0"/>
    </source>
</evidence>
<evidence type="ECO:0000305" key="2"/>
<sequence length="246" mass="28445">MTFYTEFFKRLQRLMPKNIKPKFDNDEDLLAWNQEQGRLSSESIIRENKAMKMQRVLGRSGIRELYMNCSFDNYKIEHDGQRKVLKASKRYAEEFNENIASFIFSGKPGTGKNHLASAIGNYLILHGKSILLVTVADLMSNMKGTFSGTSNITEENLLHDLSSVDLLMIDEIGMQTESRYEKVIINQIVDRRSSSKRSTGMLSNLDHKGMKSLLGERVIDRMRLGNSLWLTFEWDSYRQYVKGNEY</sequence>
<organism>
    <name type="scientific">Buchnera aphidicola subsp. Acyrthosiphon pisum (strain APS)</name>
    <name type="common">Acyrthosiphon pisum symbiotic bacterium</name>
    <dbReference type="NCBI Taxonomy" id="107806"/>
    <lineage>
        <taxon>Bacteria</taxon>
        <taxon>Pseudomonadati</taxon>
        <taxon>Pseudomonadota</taxon>
        <taxon>Gammaproteobacteria</taxon>
        <taxon>Enterobacterales</taxon>
        <taxon>Erwiniaceae</taxon>
        <taxon>Buchnera</taxon>
    </lineage>
</organism>
<proteinExistence type="inferred from homology"/>
<dbReference type="EC" id="3.6.4.-" evidence="1"/>
<dbReference type="EMBL" id="BA000003">
    <property type="protein sequence ID" value="BAB12748.1"/>
    <property type="molecule type" value="Genomic_DNA"/>
</dbReference>
<dbReference type="RefSeq" id="NP_239862.1">
    <property type="nucleotide sequence ID" value="NC_002528.1"/>
</dbReference>
<dbReference type="RefSeq" id="WP_009873982.1">
    <property type="nucleotide sequence ID" value="NZ_AP036055.1"/>
</dbReference>
<dbReference type="SMR" id="P57134"/>
<dbReference type="STRING" id="563178.BUAP5A_021"/>
<dbReference type="EnsemblBacteria" id="BAB12748">
    <property type="protein sequence ID" value="BAB12748"/>
    <property type="gene ID" value="BAB12748"/>
</dbReference>
<dbReference type="KEGG" id="buc:BU021"/>
<dbReference type="PATRIC" id="fig|107806.10.peg.33"/>
<dbReference type="eggNOG" id="COG1484">
    <property type="taxonomic scope" value="Bacteria"/>
</dbReference>
<dbReference type="HOGENOM" id="CLU_062999_3_1_6"/>
<dbReference type="Proteomes" id="UP000001806">
    <property type="component" value="Chromosome"/>
</dbReference>
<dbReference type="GO" id="GO:1990077">
    <property type="term" value="C:primosome complex"/>
    <property type="evidence" value="ECO:0007669"/>
    <property type="project" value="UniProtKB-KW"/>
</dbReference>
<dbReference type="GO" id="GO:0005524">
    <property type="term" value="F:ATP binding"/>
    <property type="evidence" value="ECO:0007669"/>
    <property type="project" value="UniProtKB-KW"/>
</dbReference>
<dbReference type="GO" id="GO:0003677">
    <property type="term" value="F:DNA binding"/>
    <property type="evidence" value="ECO:0007669"/>
    <property type="project" value="UniProtKB-KW"/>
</dbReference>
<dbReference type="GO" id="GO:0016787">
    <property type="term" value="F:hydrolase activity"/>
    <property type="evidence" value="ECO:0007669"/>
    <property type="project" value="UniProtKB-KW"/>
</dbReference>
<dbReference type="GO" id="GO:0006269">
    <property type="term" value="P:DNA replication, synthesis of primer"/>
    <property type="evidence" value="ECO:0007669"/>
    <property type="project" value="UniProtKB-KW"/>
</dbReference>
<dbReference type="CDD" id="cd00009">
    <property type="entry name" value="AAA"/>
    <property type="match status" value="1"/>
</dbReference>
<dbReference type="Gene3D" id="3.40.50.300">
    <property type="entry name" value="P-loop containing nucleotide triphosphate hydrolases"/>
    <property type="match status" value="1"/>
</dbReference>
<dbReference type="InterPro" id="IPR028350">
    <property type="entry name" value="DNAC/IstB-like"/>
</dbReference>
<dbReference type="InterPro" id="IPR002611">
    <property type="entry name" value="IstB_ATP-bd"/>
</dbReference>
<dbReference type="InterPro" id="IPR027417">
    <property type="entry name" value="P-loop_NTPase"/>
</dbReference>
<dbReference type="NCBIfam" id="NF005931">
    <property type="entry name" value="PRK07952.1"/>
    <property type="match status" value="1"/>
</dbReference>
<dbReference type="PANTHER" id="PTHR30050">
    <property type="entry name" value="CHROMOSOMAL REPLICATION INITIATOR PROTEIN DNAA"/>
    <property type="match status" value="1"/>
</dbReference>
<dbReference type="PANTHER" id="PTHR30050:SF9">
    <property type="entry name" value="DNA REPLICATION PROTEIN DNAC"/>
    <property type="match status" value="1"/>
</dbReference>
<dbReference type="Pfam" id="PF01695">
    <property type="entry name" value="IstB_IS21"/>
    <property type="match status" value="1"/>
</dbReference>
<dbReference type="PIRSF" id="PIRSF003073">
    <property type="entry name" value="DNAC_TnpB_IstB"/>
    <property type="match status" value="1"/>
</dbReference>
<dbReference type="SUPFAM" id="SSF52540">
    <property type="entry name" value="P-loop containing nucleoside triphosphate hydrolases"/>
    <property type="match status" value="1"/>
</dbReference>
<protein>
    <recommendedName>
        <fullName>Replicative helicase loader DnaC</fullName>
        <ecNumber evidence="1">3.6.4.-</ecNumber>
    </recommendedName>
    <alternativeName>
        <fullName>DNA replication protein DnaC</fullName>
    </alternativeName>
</protein>
<keyword id="KW-0067">ATP-binding</keyword>
<keyword id="KW-0235">DNA replication</keyword>
<keyword id="KW-0238">DNA-binding</keyword>
<keyword id="KW-0378">Hydrolase</keyword>
<keyword id="KW-0547">Nucleotide-binding</keyword>
<keyword id="KW-0639">Primosome</keyword>
<keyword id="KW-1185">Reference proteome</keyword>